<dbReference type="EC" id="3.6.1.31" evidence="1"/>
<dbReference type="EMBL" id="CP000458">
    <property type="protein sequence ID" value="ABK07187.1"/>
    <property type="molecule type" value="Genomic_DNA"/>
</dbReference>
<dbReference type="RefSeq" id="WP_011546603.1">
    <property type="nucleotide sequence ID" value="NC_008542.1"/>
</dbReference>
<dbReference type="SMR" id="A0K3W0"/>
<dbReference type="KEGG" id="bch:Bcen2424_0433"/>
<dbReference type="HOGENOM" id="CLU_123337_1_2_4"/>
<dbReference type="UniPathway" id="UPA00031">
    <property type="reaction ID" value="UER00007"/>
</dbReference>
<dbReference type="GO" id="GO:0005737">
    <property type="term" value="C:cytoplasm"/>
    <property type="evidence" value="ECO:0007669"/>
    <property type="project" value="UniProtKB-SubCell"/>
</dbReference>
<dbReference type="GO" id="GO:0005524">
    <property type="term" value="F:ATP binding"/>
    <property type="evidence" value="ECO:0007669"/>
    <property type="project" value="UniProtKB-KW"/>
</dbReference>
<dbReference type="GO" id="GO:0004636">
    <property type="term" value="F:phosphoribosyl-ATP diphosphatase activity"/>
    <property type="evidence" value="ECO:0007669"/>
    <property type="project" value="UniProtKB-UniRule"/>
</dbReference>
<dbReference type="GO" id="GO:0000105">
    <property type="term" value="P:L-histidine biosynthetic process"/>
    <property type="evidence" value="ECO:0007669"/>
    <property type="project" value="UniProtKB-UniRule"/>
</dbReference>
<dbReference type="CDD" id="cd11534">
    <property type="entry name" value="NTP-PPase_HisIE_like"/>
    <property type="match status" value="1"/>
</dbReference>
<dbReference type="Gene3D" id="1.10.287.1080">
    <property type="entry name" value="MazG-like"/>
    <property type="match status" value="1"/>
</dbReference>
<dbReference type="HAMAP" id="MF_01020">
    <property type="entry name" value="HisE"/>
    <property type="match status" value="1"/>
</dbReference>
<dbReference type="InterPro" id="IPR008179">
    <property type="entry name" value="HisE"/>
</dbReference>
<dbReference type="InterPro" id="IPR021130">
    <property type="entry name" value="PRib-ATP_PPHydrolase-like"/>
</dbReference>
<dbReference type="NCBIfam" id="TIGR03188">
    <property type="entry name" value="histidine_hisI"/>
    <property type="match status" value="1"/>
</dbReference>
<dbReference type="NCBIfam" id="NF001611">
    <property type="entry name" value="PRK00400.1-3"/>
    <property type="match status" value="1"/>
</dbReference>
<dbReference type="PANTHER" id="PTHR42945">
    <property type="entry name" value="HISTIDINE BIOSYNTHESIS BIFUNCTIONAL PROTEIN"/>
    <property type="match status" value="1"/>
</dbReference>
<dbReference type="PANTHER" id="PTHR42945:SF9">
    <property type="entry name" value="HISTIDINE BIOSYNTHESIS BIFUNCTIONAL PROTEIN HISIE"/>
    <property type="match status" value="1"/>
</dbReference>
<dbReference type="Pfam" id="PF01503">
    <property type="entry name" value="PRA-PH"/>
    <property type="match status" value="1"/>
</dbReference>
<dbReference type="SUPFAM" id="SSF101386">
    <property type="entry name" value="all-alpha NTP pyrophosphatases"/>
    <property type="match status" value="1"/>
</dbReference>
<keyword id="KW-0028">Amino-acid biosynthesis</keyword>
<keyword id="KW-0067">ATP-binding</keyword>
<keyword id="KW-0963">Cytoplasm</keyword>
<keyword id="KW-0368">Histidine biosynthesis</keyword>
<keyword id="KW-0378">Hydrolase</keyword>
<keyword id="KW-0547">Nucleotide-binding</keyword>
<protein>
    <recommendedName>
        <fullName evidence="1">Phosphoribosyl-ATP pyrophosphatase</fullName>
        <shortName evidence="1">PRA-PH</shortName>
        <ecNumber evidence="1">3.6.1.31</ecNumber>
    </recommendedName>
</protein>
<sequence>MTQSTEDTLLRLAAVIDSRKGGDPDQSYVSRLFHKGDDAVLKKIGEEATEVVLAAKDVRQGGAPSALVGEVADLWFHCLVMLSHFDLSPADVIAELERREGLSGIEEKALRKRREREENGG</sequence>
<comment type="catalytic activity">
    <reaction evidence="1">
        <text>1-(5-phospho-beta-D-ribosyl)-ATP + H2O = 1-(5-phospho-beta-D-ribosyl)-5'-AMP + diphosphate + H(+)</text>
        <dbReference type="Rhea" id="RHEA:22828"/>
        <dbReference type="ChEBI" id="CHEBI:15377"/>
        <dbReference type="ChEBI" id="CHEBI:15378"/>
        <dbReference type="ChEBI" id="CHEBI:33019"/>
        <dbReference type="ChEBI" id="CHEBI:59457"/>
        <dbReference type="ChEBI" id="CHEBI:73183"/>
        <dbReference type="EC" id="3.6.1.31"/>
    </reaction>
</comment>
<comment type="pathway">
    <text evidence="1">Amino-acid biosynthesis; L-histidine biosynthesis; L-histidine from 5-phospho-alpha-D-ribose 1-diphosphate: step 2/9.</text>
</comment>
<comment type="subcellular location">
    <subcellularLocation>
        <location evidence="1">Cytoplasm</location>
    </subcellularLocation>
</comment>
<comment type="similarity">
    <text evidence="1">Belongs to the PRA-PH family.</text>
</comment>
<feature type="chain" id="PRO_1000063325" description="Phosphoribosyl-ATP pyrophosphatase">
    <location>
        <begin position="1"/>
        <end position="121"/>
    </location>
</feature>
<name>HIS2_BURCH</name>
<organism>
    <name type="scientific">Burkholderia cenocepacia (strain HI2424)</name>
    <dbReference type="NCBI Taxonomy" id="331272"/>
    <lineage>
        <taxon>Bacteria</taxon>
        <taxon>Pseudomonadati</taxon>
        <taxon>Pseudomonadota</taxon>
        <taxon>Betaproteobacteria</taxon>
        <taxon>Burkholderiales</taxon>
        <taxon>Burkholderiaceae</taxon>
        <taxon>Burkholderia</taxon>
        <taxon>Burkholderia cepacia complex</taxon>
    </lineage>
</organism>
<proteinExistence type="inferred from homology"/>
<gene>
    <name evidence="1" type="primary">hisE</name>
    <name type="ordered locus">Bcen2424_0433</name>
</gene>
<evidence type="ECO:0000255" key="1">
    <source>
        <dbReference type="HAMAP-Rule" id="MF_01020"/>
    </source>
</evidence>
<reference key="1">
    <citation type="submission" date="2006-08" db="EMBL/GenBank/DDBJ databases">
        <title>Complete sequence of chromosome 1 of Burkholderia cenocepacia HI2424.</title>
        <authorList>
            <person name="Copeland A."/>
            <person name="Lucas S."/>
            <person name="Lapidus A."/>
            <person name="Barry K."/>
            <person name="Detter J.C."/>
            <person name="Glavina del Rio T."/>
            <person name="Hammon N."/>
            <person name="Israni S."/>
            <person name="Pitluck S."/>
            <person name="Chain P."/>
            <person name="Malfatti S."/>
            <person name="Shin M."/>
            <person name="Vergez L."/>
            <person name="Schmutz J."/>
            <person name="Larimer F."/>
            <person name="Land M."/>
            <person name="Hauser L."/>
            <person name="Kyrpides N."/>
            <person name="Kim E."/>
            <person name="LiPuma J.J."/>
            <person name="Gonzalez C.F."/>
            <person name="Konstantinidis K."/>
            <person name="Tiedje J.M."/>
            <person name="Richardson P."/>
        </authorList>
    </citation>
    <scope>NUCLEOTIDE SEQUENCE [LARGE SCALE GENOMIC DNA]</scope>
    <source>
        <strain>HI2424</strain>
    </source>
</reference>
<accession>A0K3W0</accession>